<protein>
    <recommendedName>
        <fullName>Major prion protein</fullName>
        <shortName>PrP</shortName>
    </recommendedName>
    <alternativeName>
        <fullName>Major scrapie-associated fibril protein 1</fullName>
    </alternativeName>
    <cdAntigenName>CD230</cdAntigenName>
</protein>
<gene>
    <name type="primary">PRNP</name>
    <name type="synonym">PRP</name>
</gene>
<proteinExistence type="evidence at protein level"/>
<name>PRIO_BOBOX</name>
<reference key="1">
    <citation type="journal article" date="2008" name="BMC Vet. Res.">
        <title>Frequencies of polymorphisms associated with BSE resistance differ significantly between Bos taurus, Bos indicus, and composite cattle.</title>
        <authorList>
            <person name="Brunelle B.W."/>
            <person name="Greenlee J.J."/>
            <person name="Seabury C.M."/>
            <person name="Brown C.E. II"/>
            <person name="Nicholson E.M."/>
        </authorList>
    </citation>
    <scope>NUCLEOTIDE SEQUENCE [GENOMIC DNA]</scope>
    <scope>VARIANT ASN-154</scope>
</reference>
<reference key="2">
    <citation type="journal article" date="2008" name="PLoS ONE">
        <title>Identification of a heritable polymorphism in bovine PRNP associated with genetic transmissible spongiform encephalopathy: evidence of heritable BSE.</title>
        <authorList>
            <person name="Nicholson E.M."/>
            <person name="Brunelle B.W."/>
            <person name="Richt J.A."/>
            <person name="Kehrli M.E. Jr."/>
            <person name="Greenlee J.J."/>
        </authorList>
    </citation>
    <scope>NUCLEOTIDE SEQUENCE [GENOMIC DNA]</scope>
    <scope>VARIANT H-TYPE BSE LYS-211</scope>
</reference>
<reference key="3">
    <citation type="journal article" date="2008" name="PLoS Pathog.">
        <title>BSE case associated with prion protein gene mutation.</title>
        <authorList>
            <person name="Richt J.A."/>
            <person name="Hall S.M."/>
        </authorList>
    </citation>
    <scope>NUCLEOTIDE SEQUENCE [GENOMIC DNA]</scope>
    <scope>VARIANT H-TYPE BSE LYS-211</scope>
</reference>
<feature type="signal peptide">
    <location>
        <begin position="1"/>
        <end position="24"/>
    </location>
</feature>
<feature type="chain" id="PRO_0000410681" description="Major prion protein">
    <location>
        <begin position="25"/>
        <end position="241"/>
    </location>
</feature>
<feature type="propeptide" id="PRO_0000410682" description="Removed in mature form" evidence="4">
    <location>
        <begin position="242"/>
        <end position="264"/>
    </location>
</feature>
<feature type="repeat" description="1">
    <location>
        <begin position="54"/>
        <end position="62"/>
    </location>
</feature>
<feature type="repeat" description="2">
    <location>
        <begin position="63"/>
        <end position="70"/>
    </location>
</feature>
<feature type="repeat" description="3">
    <location>
        <begin position="71"/>
        <end position="78"/>
    </location>
</feature>
<feature type="repeat" description="4">
    <location>
        <begin position="79"/>
        <end position="86"/>
    </location>
</feature>
<feature type="repeat" description="5">
    <location>
        <begin position="87"/>
        <end position="94"/>
    </location>
</feature>
<feature type="repeat" description="6">
    <location>
        <begin position="95"/>
        <end position="103"/>
    </location>
</feature>
<feature type="region of interest" description="Interaction with GRB2, ERI3 and SYN1" evidence="3">
    <location>
        <begin position="25"/>
        <end position="241"/>
    </location>
</feature>
<feature type="region of interest" description="Interaction with ADGRG6" evidence="3">
    <location>
        <begin position="25"/>
        <end position="41"/>
    </location>
</feature>
<feature type="region of interest" description="Disordered" evidence="5">
    <location>
        <begin position="28"/>
        <end position="119"/>
    </location>
</feature>
<feature type="region of interest" description="6 X 8 AA tandem repeats of P-H-G-G-G-W-G-Q">
    <location>
        <begin position="54"/>
        <end position="103"/>
    </location>
</feature>
<feature type="compositionally biased region" description="Gly residues" evidence="5">
    <location>
        <begin position="55"/>
        <end position="107"/>
    </location>
</feature>
<feature type="binding site" evidence="1">
    <location>
        <position position="72"/>
    </location>
    <ligand>
        <name>Cu(2+)</name>
        <dbReference type="ChEBI" id="CHEBI:29036"/>
        <label>1</label>
    </ligand>
</feature>
<feature type="binding site" evidence="1">
    <location>
        <position position="73"/>
    </location>
    <ligand>
        <name>Cu(2+)</name>
        <dbReference type="ChEBI" id="CHEBI:29036"/>
        <label>1</label>
    </ligand>
</feature>
<feature type="binding site" evidence="1">
    <location>
        <position position="74"/>
    </location>
    <ligand>
        <name>Cu(2+)</name>
        <dbReference type="ChEBI" id="CHEBI:29036"/>
        <label>1</label>
    </ligand>
</feature>
<feature type="binding site" evidence="1">
    <location>
        <position position="80"/>
    </location>
    <ligand>
        <name>Cu(2+)</name>
        <dbReference type="ChEBI" id="CHEBI:29036"/>
        <label>2</label>
    </ligand>
</feature>
<feature type="binding site" evidence="1">
    <location>
        <position position="81"/>
    </location>
    <ligand>
        <name>Cu(2+)</name>
        <dbReference type="ChEBI" id="CHEBI:29036"/>
        <label>2</label>
    </ligand>
</feature>
<feature type="binding site" evidence="1">
    <location>
        <position position="82"/>
    </location>
    <ligand>
        <name>Cu(2+)</name>
        <dbReference type="ChEBI" id="CHEBI:29036"/>
        <label>2</label>
    </ligand>
</feature>
<feature type="binding site" evidence="1">
    <location>
        <position position="88"/>
    </location>
    <ligand>
        <name>Cu(2+)</name>
        <dbReference type="ChEBI" id="CHEBI:29036"/>
        <label>3</label>
    </ligand>
</feature>
<feature type="binding site" evidence="1">
    <location>
        <position position="89"/>
    </location>
    <ligand>
        <name>Cu(2+)</name>
        <dbReference type="ChEBI" id="CHEBI:29036"/>
        <label>3</label>
    </ligand>
</feature>
<feature type="binding site" evidence="1">
    <location>
        <position position="90"/>
    </location>
    <ligand>
        <name>Cu(2+)</name>
        <dbReference type="ChEBI" id="CHEBI:29036"/>
        <label>3</label>
    </ligand>
</feature>
<feature type="binding site" evidence="1">
    <location>
        <position position="96"/>
    </location>
    <ligand>
        <name>Cu(2+)</name>
        <dbReference type="ChEBI" id="CHEBI:29036"/>
        <label>4</label>
    </ligand>
</feature>
<feature type="binding site" evidence="1">
    <location>
        <position position="98"/>
    </location>
    <ligand>
        <name>Cu(2+)</name>
        <dbReference type="ChEBI" id="CHEBI:29036"/>
        <label>4</label>
    </ligand>
</feature>
<feature type="binding site" evidence="1">
    <location>
        <position position="99"/>
    </location>
    <ligand>
        <name>Cu(2+)</name>
        <dbReference type="ChEBI" id="CHEBI:29036"/>
        <label>4</label>
    </ligand>
</feature>
<feature type="lipid moiety-binding region" description="GPI-anchor amidated alanine" evidence="4">
    <location>
        <position position="241"/>
    </location>
</feature>
<feature type="glycosylation site" description="N-linked (GlcNAc...) asparagine" evidence="4">
    <location>
        <position position="192"/>
    </location>
</feature>
<feature type="glycosylation site" description="N-linked (GlcNAc...) asparagine" evidence="4">
    <location>
        <position position="208"/>
    </location>
</feature>
<feature type="disulfide bond" evidence="2">
    <location>
        <begin position="190"/>
        <end position="225"/>
    </location>
</feature>
<feature type="sequence variant" evidence="8">
    <original>S</original>
    <variation>N</variation>
    <location>
        <position position="154"/>
    </location>
</feature>
<feature type="sequence variant" description="In H-type BSE." evidence="6 7">
    <original>E</original>
    <variation>K</variation>
    <location>
        <position position="211"/>
    </location>
</feature>
<dbReference type="EMBL" id="EU564437">
    <property type="protein sequence ID" value="ACE73916.1"/>
    <property type="molecule type" value="Genomic_DNA"/>
</dbReference>
<dbReference type="EMBL" id="EU564438">
    <property type="protein sequence ID" value="ACE73917.1"/>
    <property type="molecule type" value="Genomic_DNA"/>
</dbReference>
<dbReference type="EMBL" id="EU564439">
    <property type="protein sequence ID" value="ACE73918.1"/>
    <property type="molecule type" value="Genomic_DNA"/>
</dbReference>
<dbReference type="EMBL" id="EU564440">
    <property type="protein sequence ID" value="ACE73919.1"/>
    <property type="molecule type" value="Genomic_DNA"/>
</dbReference>
<dbReference type="EMBL" id="EU564441">
    <property type="protein sequence ID" value="ACE73920.1"/>
    <property type="molecule type" value="Genomic_DNA"/>
</dbReference>
<dbReference type="EMBL" id="EU564442">
    <property type="protein sequence ID" value="ACE73921.1"/>
    <property type="molecule type" value="Genomic_DNA"/>
</dbReference>
<dbReference type="EMBL" id="EU564443">
    <property type="protein sequence ID" value="ACE73922.1"/>
    <property type="molecule type" value="Genomic_DNA"/>
</dbReference>
<dbReference type="EMBL" id="EU564444">
    <property type="protein sequence ID" value="ACE73923.1"/>
    <property type="molecule type" value="Genomic_DNA"/>
</dbReference>
<dbReference type="EMBL" id="EU564445">
    <property type="protein sequence ID" value="ACE73924.1"/>
    <property type="molecule type" value="Genomic_DNA"/>
</dbReference>
<dbReference type="EMBL" id="EU564446">
    <property type="protein sequence ID" value="ACE73925.1"/>
    <property type="molecule type" value="Genomic_DNA"/>
</dbReference>
<dbReference type="EMBL" id="EU564447">
    <property type="protein sequence ID" value="ACE73926.1"/>
    <property type="molecule type" value="Genomic_DNA"/>
</dbReference>
<dbReference type="EMBL" id="EU564448">
    <property type="protein sequence ID" value="ACE73927.1"/>
    <property type="molecule type" value="Genomic_DNA"/>
</dbReference>
<dbReference type="EMBL" id="EU564449">
    <property type="protein sequence ID" value="ACE73928.1"/>
    <property type="molecule type" value="Genomic_DNA"/>
</dbReference>
<dbReference type="EMBL" id="EU564450">
    <property type="protein sequence ID" value="ACE73929.1"/>
    <property type="molecule type" value="Genomic_DNA"/>
</dbReference>
<dbReference type="EMBL" id="EU564507">
    <property type="protein sequence ID" value="ACE73986.1"/>
    <property type="molecule type" value="Genomic_DNA"/>
</dbReference>
<dbReference type="EMBL" id="EU564508">
    <property type="protein sequence ID" value="ACE73987.1"/>
    <property type="molecule type" value="Genomic_DNA"/>
</dbReference>
<dbReference type="EMBL" id="EU564509">
    <property type="protein sequence ID" value="ACE73988.1"/>
    <property type="molecule type" value="Genomic_DNA"/>
</dbReference>
<dbReference type="EMBL" id="EU564510">
    <property type="protein sequence ID" value="ACE73989.1"/>
    <property type="molecule type" value="Genomic_DNA"/>
</dbReference>
<dbReference type="EMBL" id="EU564511">
    <property type="protein sequence ID" value="ACE73990.1"/>
    <property type="molecule type" value="Genomic_DNA"/>
</dbReference>
<dbReference type="EMBL" id="EU564512">
    <property type="protein sequence ID" value="ACE73991.1"/>
    <property type="molecule type" value="Genomic_DNA"/>
</dbReference>
<dbReference type="EMBL" id="EU557971">
    <property type="protein sequence ID" value="ACH43175.1"/>
    <property type="molecule type" value="Genomic_DNA"/>
</dbReference>
<dbReference type="EMBL" id="EU557972">
    <property type="protein sequence ID" value="ACH43176.1"/>
    <property type="molecule type" value="Genomic_DNA"/>
</dbReference>
<dbReference type="EMBL" id="EU809428">
    <property type="protein sequence ID" value="ACH43188.1"/>
    <property type="molecule type" value="Genomic_DNA"/>
</dbReference>
<dbReference type="RefSeq" id="XP_027415235.1">
    <property type="nucleotide sequence ID" value="XM_027559434.1"/>
</dbReference>
<dbReference type="RefSeq" id="XP_027415236.1">
    <property type="nucleotide sequence ID" value="XM_027559435.1"/>
</dbReference>
<dbReference type="BMRB" id="B5SY89"/>
<dbReference type="SMR" id="B5SY89"/>
<dbReference type="STRING" id="30522.B5SY89"/>
<dbReference type="GlyCosmos" id="B5SY89">
    <property type="glycosylation" value="2 sites, No reported glycans"/>
</dbReference>
<dbReference type="Ensembl" id="ENSBIXT00000025998.1">
    <property type="protein sequence ID" value="ENSBIXP00000036088.1"/>
    <property type="gene ID" value="ENSBIXG00000019467.1"/>
</dbReference>
<dbReference type="Ensembl" id="ENSBIXT00005000650.1">
    <property type="protein sequence ID" value="ENSBIXP00005032802.1"/>
    <property type="gene ID" value="ENSBIXG00005013353.1"/>
</dbReference>
<dbReference type="GeneID" id="113903377"/>
<dbReference type="GeneTree" id="ENSGT00510000049083"/>
<dbReference type="OMA" id="QMCTTQY"/>
<dbReference type="Proteomes" id="UP000314981">
    <property type="component" value="Chromosome 13"/>
</dbReference>
<dbReference type="Proteomes" id="UP000429181">
    <property type="component" value="Chromosome 13"/>
</dbReference>
<dbReference type="GO" id="GO:0009986">
    <property type="term" value="C:cell surface"/>
    <property type="evidence" value="ECO:0007669"/>
    <property type="project" value="Ensembl"/>
</dbReference>
<dbReference type="GO" id="GO:0005829">
    <property type="term" value="C:cytosol"/>
    <property type="evidence" value="ECO:0007669"/>
    <property type="project" value="Ensembl"/>
</dbReference>
<dbReference type="GO" id="GO:0030425">
    <property type="term" value="C:dendrite"/>
    <property type="evidence" value="ECO:0007669"/>
    <property type="project" value="Ensembl"/>
</dbReference>
<dbReference type="GO" id="GO:0005794">
    <property type="term" value="C:Golgi apparatus"/>
    <property type="evidence" value="ECO:0007669"/>
    <property type="project" value="UniProtKB-SubCell"/>
</dbReference>
<dbReference type="GO" id="GO:0016234">
    <property type="term" value="C:inclusion body"/>
    <property type="evidence" value="ECO:0007669"/>
    <property type="project" value="Ensembl"/>
</dbReference>
<dbReference type="GO" id="GO:0045121">
    <property type="term" value="C:membrane raft"/>
    <property type="evidence" value="ECO:0007669"/>
    <property type="project" value="Ensembl"/>
</dbReference>
<dbReference type="GO" id="GO:0031965">
    <property type="term" value="C:nuclear membrane"/>
    <property type="evidence" value="ECO:0007669"/>
    <property type="project" value="Ensembl"/>
</dbReference>
<dbReference type="GO" id="GO:0005886">
    <property type="term" value="C:plasma membrane"/>
    <property type="evidence" value="ECO:0007669"/>
    <property type="project" value="UniProtKB-SubCell"/>
</dbReference>
<dbReference type="GO" id="GO:0098552">
    <property type="term" value="C:side of membrane"/>
    <property type="evidence" value="ECO:0007669"/>
    <property type="project" value="UniProtKB-KW"/>
</dbReference>
<dbReference type="GO" id="GO:0001540">
    <property type="term" value="F:amyloid-beta binding"/>
    <property type="evidence" value="ECO:0007669"/>
    <property type="project" value="Ensembl"/>
</dbReference>
<dbReference type="GO" id="GO:1903136">
    <property type="term" value="F:cuprous ion binding"/>
    <property type="evidence" value="ECO:0007669"/>
    <property type="project" value="Ensembl"/>
</dbReference>
<dbReference type="GO" id="GO:0042802">
    <property type="term" value="F:identical protein binding"/>
    <property type="evidence" value="ECO:0007669"/>
    <property type="project" value="Ensembl"/>
</dbReference>
<dbReference type="GO" id="GO:0008017">
    <property type="term" value="F:microtubule binding"/>
    <property type="evidence" value="ECO:0007669"/>
    <property type="project" value="Ensembl"/>
</dbReference>
<dbReference type="GO" id="GO:0140693">
    <property type="term" value="F:molecular condensate scaffold activity"/>
    <property type="evidence" value="ECO:0007669"/>
    <property type="project" value="Ensembl"/>
</dbReference>
<dbReference type="GO" id="GO:0044877">
    <property type="term" value="F:protein-containing complex binding"/>
    <property type="evidence" value="ECO:0007669"/>
    <property type="project" value="Ensembl"/>
</dbReference>
<dbReference type="GO" id="GO:1904646">
    <property type="term" value="P:cellular response to amyloid-beta"/>
    <property type="evidence" value="ECO:0007669"/>
    <property type="project" value="Ensembl"/>
</dbReference>
<dbReference type="GO" id="GO:0071280">
    <property type="term" value="P:cellular response to copper ion"/>
    <property type="evidence" value="ECO:0007669"/>
    <property type="project" value="Ensembl"/>
</dbReference>
<dbReference type="GO" id="GO:0035556">
    <property type="term" value="P:intracellular signal transduction"/>
    <property type="evidence" value="ECO:0007669"/>
    <property type="project" value="Ensembl"/>
</dbReference>
<dbReference type="GO" id="GO:0050850">
    <property type="term" value="P:positive regulation of calcium-mediated signaling"/>
    <property type="evidence" value="ECO:0007669"/>
    <property type="project" value="Ensembl"/>
</dbReference>
<dbReference type="GO" id="GO:1900451">
    <property type="term" value="P:positive regulation of glutamate receptor signaling pathway"/>
    <property type="evidence" value="ECO:0007669"/>
    <property type="project" value="Ensembl"/>
</dbReference>
<dbReference type="GO" id="GO:0043525">
    <property type="term" value="P:positive regulation of neuron apoptotic process"/>
    <property type="evidence" value="ECO:0007669"/>
    <property type="project" value="Ensembl"/>
</dbReference>
<dbReference type="GO" id="GO:0031648">
    <property type="term" value="P:protein destabilization"/>
    <property type="evidence" value="ECO:0007669"/>
    <property type="project" value="Ensembl"/>
</dbReference>
<dbReference type="GO" id="GO:0051260">
    <property type="term" value="P:protein homooligomerization"/>
    <property type="evidence" value="ECO:0007669"/>
    <property type="project" value="InterPro"/>
</dbReference>
<dbReference type="FunFam" id="1.10.790.10:FF:000001">
    <property type="entry name" value="Major prion protein"/>
    <property type="match status" value="1"/>
</dbReference>
<dbReference type="Gene3D" id="1.10.790.10">
    <property type="entry name" value="Prion/Doppel protein, beta-ribbon domain"/>
    <property type="match status" value="1"/>
</dbReference>
<dbReference type="InterPro" id="IPR000817">
    <property type="entry name" value="Prion"/>
</dbReference>
<dbReference type="InterPro" id="IPR036924">
    <property type="entry name" value="Prion/Doppel_b-ribbon_dom_sf"/>
</dbReference>
<dbReference type="InterPro" id="IPR022416">
    <property type="entry name" value="Prion/Doppel_prot_b-ribbon_dom"/>
</dbReference>
<dbReference type="InterPro" id="IPR020949">
    <property type="entry name" value="Prion_copper_b_octapeptide"/>
</dbReference>
<dbReference type="InterPro" id="IPR025860">
    <property type="entry name" value="Prion_N"/>
</dbReference>
<dbReference type="PANTHER" id="PTHR15506">
    <property type="entry name" value="DOPPEL PRION"/>
    <property type="match status" value="1"/>
</dbReference>
<dbReference type="PANTHER" id="PTHR15506:SF2">
    <property type="entry name" value="MAJOR PRION PROTEIN"/>
    <property type="match status" value="1"/>
</dbReference>
<dbReference type="Pfam" id="PF00377">
    <property type="entry name" value="Prion"/>
    <property type="match status" value="1"/>
</dbReference>
<dbReference type="Pfam" id="PF11587">
    <property type="entry name" value="Prion_bPrPp"/>
    <property type="match status" value="1"/>
</dbReference>
<dbReference type="Pfam" id="PF03991">
    <property type="entry name" value="Prion_octapep"/>
    <property type="match status" value="1"/>
</dbReference>
<dbReference type="PRINTS" id="PR00341">
    <property type="entry name" value="PRION"/>
</dbReference>
<dbReference type="SMART" id="SM00157">
    <property type="entry name" value="PRP"/>
    <property type="match status" value="1"/>
</dbReference>
<dbReference type="SUPFAM" id="SSF54098">
    <property type="entry name" value="Prion-like"/>
    <property type="match status" value="1"/>
</dbReference>
<dbReference type="PROSITE" id="PS00291">
    <property type="entry name" value="PRION_1"/>
    <property type="match status" value="1"/>
</dbReference>
<dbReference type="PROSITE" id="PS00706">
    <property type="entry name" value="PRION_2"/>
    <property type="match status" value="1"/>
</dbReference>
<keyword id="KW-0034">Amyloid</keyword>
<keyword id="KW-1003">Cell membrane</keyword>
<keyword id="KW-0186">Copper</keyword>
<keyword id="KW-0225">Disease variant</keyword>
<keyword id="KW-1015">Disulfide bond</keyword>
<keyword id="KW-0325">Glycoprotein</keyword>
<keyword id="KW-0333">Golgi apparatus</keyword>
<keyword id="KW-0336">GPI-anchor</keyword>
<keyword id="KW-0449">Lipoprotein</keyword>
<keyword id="KW-0472">Membrane</keyword>
<keyword id="KW-0479">Metal-binding</keyword>
<keyword id="KW-0640">Prion</keyword>
<keyword id="KW-1185">Reference proteome</keyword>
<keyword id="KW-0677">Repeat</keyword>
<keyword id="KW-0732">Signal</keyword>
<keyword id="KW-0862">Zinc</keyword>
<comment type="function">
    <text evidence="1 3">Its primary physiological function is unclear. May play a role in neuronal development and synaptic plasticity. May be required for neuronal myelin sheath maintenance. May promote myelin homeostasis through acting as an agonist for ADGRG6 receptor. May play a role in iron uptake and iron homeostasis. Soluble oligomers are toxic to cultured neuroblastoma cells and induce apoptosis (in vitro) (By similarity). Association with GPC1 (via its heparan sulfate chains) targets PRNP to lipid rafts. Also provides Cu(2+) or Zn(2+) for the ascorbate-mediated GPC1 deaminase degradation of its heparan sulfate side chains (By similarity).</text>
</comment>
<comment type="subunit">
    <text evidence="1 3">Monomer and homodimer. Has a tendency to aggregate into amyloid fibrils containing a cross-beta spine, formed by a steric zipper of superposed beta-strands. Soluble oligomers may represent an intermediate stage on the path to fibril formation. Copper binding may promote oligomerization. Interacts with GRB2, APP, ERI3/PRNPIP and SYN1 (By similarity). Mislocalized cytosolically exposed PrP interacts with MGRN1; this interaction alters MGRN1 subcellular location and causes lysosomal enlargement (By similarity). Interacts with APP. Interacts with KIAA1191 (By similarity). Interacts with ADGRG6 (By similarity).</text>
</comment>
<comment type="subcellular location">
    <subcellularLocation>
        <location evidence="1">Cell membrane</location>
        <topology evidence="1">Lipid-anchor</topology>
        <topology evidence="1">GPI-anchor</topology>
    </subcellularLocation>
    <subcellularLocation>
        <location evidence="3">Golgi apparatus</location>
    </subcellularLocation>
    <text evidence="1">Targeted to lipid rafts via association with the heparan sulfate chains of GPC1. Colocates, in the presence of Cu(2+), to vesicles in para- and perinuclear regions, where both proteins undergo internalization. Heparin displaces PRNP from lipid rafts and promotes endocytosis.</text>
</comment>
<comment type="domain">
    <text evidence="1">The normal, monomeric form has a mainly alpha-helical structure. The disease-associated, protease-resistant form forms amyloid fibrils containing a cross-beta spine, formed by a steric zipper of superposed beta-strands. Disease mutations may favor intermolecular contacts via short beta strands, and may thereby trigger oligomerization.</text>
</comment>
<comment type="domain">
    <text evidence="1">Contains an N-terminal region composed of octamer repeats. At low copper concentrations, the sidechains of His residues from three or four repeats contribute to the binding of a single copper ion. Alternatively, a copper ion can be bound by interaction with the sidechain and backbone amide nitrogen of a single His residue. The observed copper binding stoichiometry suggests that two repeat regions cooperate to stabilize the binding of a single copper ion. At higher copper concentrations, each octamer can bind one copper ion by interactions with the His sidechain and Gly backbone atoms. A mixture of binding types may occur, especially in the case of octamer repeat expansion. Copper binding may stabilize the conformation of this region and may promote oligomerization.</text>
</comment>
<comment type="disease">
    <text evidence="9">Variations in PRNP are responsible of transmissible bovine spongiform encephalopathies (BSE), a class of neurodegenerative diseases that affect various mammals. These diseases are caused by abnormally folded prion proteins. BSE can be subdivided into at least three groups: classical, H-type and L-type, with the latter 2 collectively referred to as atypical BSE. Susceptibility or resistance to a BSE disease can be influenced by at least 3 factors related to the host prion protein: protein expression levels, number of octapeptide repeats, and specific polymorphisms. In cattle, as in humans, BSEs can occur as infectious, spontaneous and genetic diseases. The heritable variant Lys-211 can be the cause of genetic late onset H-type BSE.</text>
</comment>
<comment type="similarity">
    <text evidence="9">Belongs to the prion family.</text>
</comment>
<accession>B5SY89</accession>
<accession>B5T9Q3</accession>
<accession>B6S1H5</accession>
<accession>B6S1P8</accession>
<organism>
    <name type="scientific">Bos indicus x Bos taurus</name>
    <name type="common">Hybrid cattle</name>
    <dbReference type="NCBI Taxonomy" id="30522"/>
    <lineage>
        <taxon>Eukaryota</taxon>
        <taxon>Metazoa</taxon>
        <taxon>Chordata</taxon>
        <taxon>Craniata</taxon>
        <taxon>Vertebrata</taxon>
        <taxon>Euteleostomi</taxon>
        <taxon>Mammalia</taxon>
        <taxon>Eutheria</taxon>
        <taxon>Laurasiatheria</taxon>
        <taxon>Artiodactyla</taxon>
        <taxon>Ruminantia</taxon>
        <taxon>Pecora</taxon>
        <taxon>Bovidae</taxon>
        <taxon>Bovinae</taxon>
        <taxon>Bos</taxon>
    </lineage>
</organism>
<evidence type="ECO:0000250" key="1">
    <source>
        <dbReference type="UniProtKB" id="P04156"/>
    </source>
</evidence>
<evidence type="ECO:0000250" key="2">
    <source>
        <dbReference type="UniProtKB" id="P04273"/>
    </source>
</evidence>
<evidence type="ECO:0000250" key="3">
    <source>
        <dbReference type="UniProtKB" id="P04925"/>
    </source>
</evidence>
<evidence type="ECO:0000255" key="4"/>
<evidence type="ECO:0000256" key="5">
    <source>
        <dbReference type="SAM" id="MobiDB-lite"/>
    </source>
</evidence>
<evidence type="ECO:0000269" key="6">
    <source>
    </source>
</evidence>
<evidence type="ECO:0000269" key="7">
    <source>
    </source>
</evidence>
<evidence type="ECO:0000269" key="8">
    <source>
    </source>
</evidence>
<evidence type="ECO:0000305" key="9"/>
<sequence>MVKSHIGSWILVLFVAMWSDVGLCKKRPKPGGGWNTGGSRYPGQGSPGGNRYPPQGGGGWGQPHGGGWGQPHGGGWGQPHGGGWGQPHGGGWGQPHGGGGWGQGGTHGQWNKPSKPKTNMKHVAGAAAAGAVVGGLGGYMLGSAMSRPLIHFGSDYEDRYYRENMHRYPNQVYYRPVDQYSNQNNFVHDCVNITVKEHTVTTTTKGENFTETDIKMMERVVEQMCITQYQRESQAYYQRGASVILFSSPPVILLISFLIFLIVG</sequence>